<keyword id="KW-0001">2Fe-2S</keyword>
<keyword id="KW-0028">Amino-acid biosynthesis</keyword>
<keyword id="KW-0100">Branched-chain amino acid biosynthesis</keyword>
<keyword id="KW-0408">Iron</keyword>
<keyword id="KW-0411">Iron-sulfur</keyword>
<keyword id="KW-0456">Lyase</keyword>
<keyword id="KW-0460">Magnesium</keyword>
<keyword id="KW-0479">Metal-binding</keyword>
<keyword id="KW-1185">Reference proteome</keyword>
<feature type="chain" id="PRO_1000000959" description="Dihydroxy-acid dehydratase">
    <location>
        <begin position="1"/>
        <end position="611"/>
    </location>
</feature>
<feature type="active site" description="Proton acceptor" evidence="1">
    <location>
        <position position="517"/>
    </location>
</feature>
<feature type="binding site" evidence="1">
    <location>
        <position position="81"/>
    </location>
    <ligand>
        <name>Mg(2+)</name>
        <dbReference type="ChEBI" id="CHEBI:18420"/>
    </ligand>
</feature>
<feature type="binding site" evidence="1">
    <location>
        <position position="122"/>
    </location>
    <ligand>
        <name>[2Fe-2S] cluster</name>
        <dbReference type="ChEBI" id="CHEBI:190135"/>
    </ligand>
</feature>
<feature type="binding site" evidence="1">
    <location>
        <position position="123"/>
    </location>
    <ligand>
        <name>Mg(2+)</name>
        <dbReference type="ChEBI" id="CHEBI:18420"/>
    </ligand>
</feature>
<feature type="binding site" description="via carbamate group" evidence="1">
    <location>
        <position position="124"/>
    </location>
    <ligand>
        <name>Mg(2+)</name>
        <dbReference type="ChEBI" id="CHEBI:18420"/>
    </ligand>
</feature>
<feature type="binding site" evidence="1">
    <location>
        <position position="195"/>
    </location>
    <ligand>
        <name>[2Fe-2S] cluster</name>
        <dbReference type="ChEBI" id="CHEBI:190135"/>
    </ligand>
</feature>
<feature type="binding site" evidence="1">
    <location>
        <position position="491"/>
    </location>
    <ligand>
        <name>Mg(2+)</name>
        <dbReference type="ChEBI" id="CHEBI:18420"/>
    </ligand>
</feature>
<feature type="modified residue" description="N6-carboxylysine" evidence="1">
    <location>
        <position position="124"/>
    </location>
</feature>
<accession>Q2YNW9</accession>
<sequence>MPPYRSRTTTHGRNMAGARGLWRATGMKDEDFGKPIIAVVNSFTQFVPGHVHLKDLGQLVAREIESAGGVAKEFNTIAVDDGIAMGHDGMLYSLPSRELIADSVEYMVNAHCADAMVCISNCDKITPGMLMAALRLNIPVVFVSGGPMEAGKVVWEDSVKKLDLVDAMVAAADDHYTDEQVKAIERSACPTCGSCSGMFTANSMNCLTEALGLSLPGNGSTLATHADRKRLFVEAGHLIVDLARRYYEQDDESVLPRSIATFSAFENAMTLDIAMGGSTNTVLHLLAAAQEAEIDFTMADIDRLSRRVPVLCKVAPAVSSVHMEDVHHAGGIMGILGQLDNAGLLTTSIPTVHSETLAKALDHWDVTRTNSEMVHKFYSAAPGGVPTQVAFSQERRFDKVDTDREKGVIRSKEHAFSQDGGLAVLYGNLAEDGCIVKTAGVDDSILKFSGPARIFESQDSAVLGILNGKIKPGDIVLIRYEGPRGGPGMQEMLYPTSYLKSKGLGKACALITDGRFSGGSSGLSIGHVSPEAAEGGTIGLVREGDIIDIDIPNRKIHLAVDDATLAERRAEQDAAGWKPAEERKRKISTALKAYAAMATSAARGAVRKLPD</sequence>
<protein>
    <recommendedName>
        <fullName evidence="1">Dihydroxy-acid dehydratase</fullName>
        <shortName evidence="1">DAD</shortName>
        <ecNumber evidence="1">4.2.1.9</ecNumber>
    </recommendedName>
</protein>
<comment type="function">
    <text evidence="1">Functions in the biosynthesis of branched-chain amino acids. Catalyzes the dehydration of (2R,3R)-2,3-dihydroxy-3-methylpentanoate (2,3-dihydroxy-3-methylvalerate) into 2-oxo-3-methylpentanoate (2-oxo-3-methylvalerate) and of (2R)-2,3-dihydroxy-3-methylbutanoate (2,3-dihydroxyisovalerate) into 2-oxo-3-methylbutanoate (2-oxoisovalerate), the penultimate precursor to L-isoleucine and L-valine, respectively.</text>
</comment>
<comment type="catalytic activity">
    <reaction evidence="1">
        <text>(2R)-2,3-dihydroxy-3-methylbutanoate = 3-methyl-2-oxobutanoate + H2O</text>
        <dbReference type="Rhea" id="RHEA:24809"/>
        <dbReference type="ChEBI" id="CHEBI:11851"/>
        <dbReference type="ChEBI" id="CHEBI:15377"/>
        <dbReference type="ChEBI" id="CHEBI:49072"/>
        <dbReference type="EC" id="4.2.1.9"/>
    </reaction>
    <physiologicalReaction direction="left-to-right" evidence="1">
        <dbReference type="Rhea" id="RHEA:24810"/>
    </physiologicalReaction>
</comment>
<comment type="catalytic activity">
    <reaction evidence="1">
        <text>(2R,3R)-2,3-dihydroxy-3-methylpentanoate = (S)-3-methyl-2-oxopentanoate + H2O</text>
        <dbReference type="Rhea" id="RHEA:27694"/>
        <dbReference type="ChEBI" id="CHEBI:15377"/>
        <dbReference type="ChEBI" id="CHEBI:35146"/>
        <dbReference type="ChEBI" id="CHEBI:49258"/>
        <dbReference type="EC" id="4.2.1.9"/>
    </reaction>
    <physiologicalReaction direction="left-to-right" evidence="1">
        <dbReference type="Rhea" id="RHEA:27695"/>
    </physiologicalReaction>
</comment>
<comment type="cofactor">
    <cofactor evidence="1">
        <name>[2Fe-2S] cluster</name>
        <dbReference type="ChEBI" id="CHEBI:190135"/>
    </cofactor>
    <text evidence="1">Binds 1 [2Fe-2S] cluster per subunit. This cluster acts as a Lewis acid cofactor.</text>
</comment>
<comment type="cofactor">
    <cofactor evidence="1">
        <name>Mg(2+)</name>
        <dbReference type="ChEBI" id="CHEBI:18420"/>
    </cofactor>
</comment>
<comment type="pathway">
    <text evidence="1">Amino-acid biosynthesis; L-isoleucine biosynthesis; L-isoleucine from 2-oxobutanoate: step 3/4.</text>
</comment>
<comment type="pathway">
    <text evidence="1">Amino-acid biosynthesis; L-valine biosynthesis; L-valine from pyruvate: step 3/4.</text>
</comment>
<comment type="subunit">
    <text evidence="1">Homodimer.</text>
</comment>
<comment type="similarity">
    <text evidence="1">Belongs to the IlvD/Edd family.</text>
</comment>
<dbReference type="EC" id="4.2.1.9" evidence="1"/>
<dbReference type="EMBL" id="AM040264">
    <property type="protein sequence ID" value="CAJ10052.1"/>
    <property type="molecule type" value="Genomic_DNA"/>
</dbReference>
<dbReference type="RefSeq" id="WP_002965347.1">
    <property type="nucleotide sequence ID" value="NZ_KN046823.1"/>
</dbReference>
<dbReference type="SMR" id="Q2YNW9"/>
<dbReference type="STRING" id="359391.BAB1_0096"/>
<dbReference type="GeneID" id="93017425"/>
<dbReference type="KEGG" id="bmf:BAB1_0096"/>
<dbReference type="PATRIC" id="fig|359391.11.peg.1521"/>
<dbReference type="HOGENOM" id="CLU_014271_4_2_5"/>
<dbReference type="PhylomeDB" id="Q2YNW9"/>
<dbReference type="UniPathway" id="UPA00047">
    <property type="reaction ID" value="UER00057"/>
</dbReference>
<dbReference type="UniPathway" id="UPA00049">
    <property type="reaction ID" value="UER00061"/>
</dbReference>
<dbReference type="PRO" id="PR:Q2YNW9"/>
<dbReference type="Proteomes" id="UP000002719">
    <property type="component" value="Chromosome I"/>
</dbReference>
<dbReference type="GO" id="GO:0005829">
    <property type="term" value="C:cytosol"/>
    <property type="evidence" value="ECO:0007669"/>
    <property type="project" value="TreeGrafter"/>
</dbReference>
<dbReference type="GO" id="GO:0051537">
    <property type="term" value="F:2 iron, 2 sulfur cluster binding"/>
    <property type="evidence" value="ECO:0007669"/>
    <property type="project" value="UniProtKB-UniRule"/>
</dbReference>
<dbReference type="GO" id="GO:0004160">
    <property type="term" value="F:dihydroxy-acid dehydratase activity"/>
    <property type="evidence" value="ECO:0007669"/>
    <property type="project" value="UniProtKB-UniRule"/>
</dbReference>
<dbReference type="GO" id="GO:0000287">
    <property type="term" value="F:magnesium ion binding"/>
    <property type="evidence" value="ECO:0007669"/>
    <property type="project" value="UniProtKB-UniRule"/>
</dbReference>
<dbReference type="GO" id="GO:0009097">
    <property type="term" value="P:isoleucine biosynthetic process"/>
    <property type="evidence" value="ECO:0007669"/>
    <property type="project" value="UniProtKB-UniRule"/>
</dbReference>
<dbReference type="GO" id="GO:0009099">
    <property type="term" value="P:L-valine biosynthetic process"/>
    <property type="evidence" value="ECO:0007669"/>
    <property type="project" value="UniProtKB-UniRule"/>
</dbReference>
<dbReference type="FunFam" id="3.50.30.80:FF:000001">
    <property type="entry name" value="Dihydroxy-acid dehydratase"/>
    <property type="match status" value="1"/>
</dbReference>
<dbReference type="Gene3D" id="3.50.30.80">
    <property type="entry name" value="IlvD/EDD C-terminal domain-like"/>
    <property type="match status" value="1"/>
</dbReference>
<dbReference type="HAMAP" id="MF_00012">
    <property type="entry name" value="IlvD"/>
    <property type="match status" value="1"/>
</dbReference>
<dbReference type="InterPro" id="IPR042096">
    <property type="entry name" value="Dihydro-acid_dehy_C"/>
</dbReference>
<dbReference type="InterPro" id="IPR004404">
    <property type="entry name" value="DihydroxyA_deHydtase"/>
</dbReference>
<dbReference type="InterPro" id="IPR020558">
    <property type="entry name" value="DiOHA_6PGluconate_deHydtase_CS"/>
</dbReference>
<dbReference type="InterPro" id="IPR056740">
    <property type="entry name" value="ILV_EDD_C"/>
</dbReference>
<dbReference type="InterPro" id="IPR000581">
    <property type="entry name" value="ILV_EDD_N"/>
</dbReference>
<dbReference type="InterPro" id="IPR037237">
    <property type="entry name" value="IlvD/EDD_N"/>
</dbReference>
<dbReference type="NCBIfam" id="TIGR00110">
    <property type="entry name" value="ilvD"/>
    <property type="match status" value="1"/>
</dbReference>
<dbReference type="NCBIfam" id="NF009103">
    <property type="entry name" value="PRK12448.1"/>
    <property type="match status" value="1"/>
</dbReference>
<dbReference type="PANTHER" id="PTHR43661">
    <property type="entry name" value="D-XYLONATE DEHYDRATASE"/>
    <property type="match status" value="1"/>
</dbReference>
<dbReference type="PANTHER" id="PTHR43661:SF3">
    <property type="entry name" value="D-XYLONATE DEHYDRATASE YAGF-RELATED"/>
    <property type="match status" value="1"/>
</dbReference>
<dbReference type="Pfam" id="PF24877">
    <property type="entry name" value="ILV_EDD_C"/>
    <property type="match status" value="1"/>
</dbReference>
<dbReference type="Pfam" id="PF00920">
    <property type="entry name" value="ILVD_EDD_N"/>
    <property type="match status" value="1"/>
</dbReference>
<dbReference type="SUPFAM" id="SSF143975">
    <property type="entry name" value="IlvD/EDD N-terminal domain-like"/>
    <property type="match status" value="1"/>
</dbReference>
<dbReference type="SUPFAM" id="SSF52016">
    <property type="entry name" value="LeuD/IlvD-like"/>
    <property type="match status" value="1"/>
</dbReference>
<dbReference type="PROSITE" id="PS00886">
    <property type="entry name" value="ILVD_EDD_1"/>
    <property type="match status" value="1"/>
</dbReference>
<dbReference type="PROSITE" id="PS00887">
    <property type="entry name" value="ILVD_EDD_2"/>
    <property type="match status" value="1"/>
</dbReference>
<name>ILVD_BRUA2</name>
<reference key="1">
    <citation type="journal article" date="2005" name="Infect. Immun.">
        <title>Whole-genome analyses of speciation events in pathogenic Brucellae.</title>
        <authorList>
            <person name="Chain P.S."/>
            <person name="Comerci D.J."/>
            <person name="Tolmasky M.E."/>
            <person name="Larimer F.W."/>
            <person name="Malfatti S.A."/>
            <person name="Vergez L.M."/>
            <person name="Aguero F."/>
            <person name="Land M.L."/>
            <person name="Ugalde R.A."/>
            <person name="Garcia E."/>
        </authorList>
    </citation>
    <scope>NUCLEOTIDE SEQUENCE [LARGE SCALE GENOMIC DNA]</scope>
    <source>
        <strain>2308</strain>
    </source>
</reference>
<evidence type="ECO:0000255" key="1">
    <source>
        <dbReference type="HAMAP-Rule" id="MF_00012"/>
    </source>
</evidence>
<organism>
    <name type="scientific">Brucella abortus (strain 2308)</name>
    <dbReference type="NCBI Taxonomy" id="359391"/>
    <lineage>
        <taxon>Bacteria</taxon>
        <taxon>Pseudomonadati</taxon>
        <taxon>Pseudomonadota</taxon>
        <taxon>Alphaproteobacteria</taxon>
        <taxon>Hyphomicrobiales</taxon>
        <taxon>Brucellaceae</taxon>
        <taxon>Brucella/Ochrobactrum group</taxon>
        <taxon>Brucella</taxon>
    </lineage>
</organism>
<proteinExistence type="inferred from homology"/>
<gene>
    <name evidence="1" type="primary">ilvD</name>
    <name type="ordered locus">BAB1_0096</name>
</gene>